<evidence type="ECO:0000255" key="1">
    <source>
        <dbReference type="HAMAP-Rule" id="MF_00409"/>
    </source>
</evidence>
<organism>
    <name type="scientific">Enterobacter sp. (strain 638)</name>
    <dbReference type="NCBI Taxonomy" id="399742"/>
    <lineage>
        <taxon>Bacteria</taxon>
        <taxon>Pseudomonadati</taxon>
        <taxon>Pseudomonadota</taxon>
        <taxon>Gammaproteobacteria</taxon>
        <taxon>Enterobacterales</taxon>
        <taxon>Enterobacteriaceae</taxon>
        <taxon>Enterobacter</taxon>
    </lineage>
</organism>
<sequence length="325" mass="35511">MIARIWSGKSPLWLLLLPLSWLYGLVSGLIRLCYRIGIKRSWRAPVPVVVVGNLTAGGNGKTPVVIWLVEQLAHRGIQAGVVSRGYGGKAESYPLLLTSQTTTEQAGDEPVLIFQRTGAPVAVSPNRSEAVQVLLAAHPVDIVITDDGLQHYALARDKEIVVIDGVRRFGNGWWLPAGPMRERASRLRTVDAVIVNGGEALPGEIPMRLIPSQAVNLLTGERREVSQLPALVAMAGIGHPPRFFATLEQCGAHLEARIPLADHQALSIVDVDPLVTVNQNLIMTEKDAVKCRAFAKSNWWYLPVDAEFSGEKPELLLQELMSLVR</sequence>
<proteinExistence type="inferred from homology"/>
<feature type="chain" id="PRO_1000123714" description="Tetraacyldisaccharide 4'-kinase">
    <location>
        <begin position="1"/>
        <end position="325"/>
    </location>
</feature>
<feature type="binding site" evidence="1">
    <location>
        <begin position="55"/>
        <end position="62"/>
    </location>
    <ligand>
        <name>ATP</name>
        <dbReference type="ChEBI" id="CHEBI:30616"/>
    </ligand>
</feature>
<accession>A4W8T4</accession>
<gene>
    <name evidence="1" type="primary">lpxK</name>
    <name type="ordered locus">Ent638_1434</name>
</gene>
<dbReference type="EC" id="2.7.1.130" evidence="1"/>
<dbReference type="EMBL" id="CP000653">
    <property type="protein sequence ID" value="ABP60114.1"/>
    <property type="molecule type" value="Genomic_DNA"/>
</dbReference>
<dbReference type="RefSeq" id="WP_012016831.1">
    <property type="nucleotide sequence ID" value="NC_009436.1"/>
</dbReference>
<dbReference type="SMR" id="A4W8T4"/>
<dbReference type="STRING" id="399742.Ent638_1434"/>
<dbReference type="KEGG" id="ent:Ent638_1434"/>
<dbReference type="eggNOG" id="COG1663">
    <property type="taxonomic scope" value="Bacteria"/>
</dbReference>
<dbReference type="HOGENOM" id="CLU_038816_2_0_6"/>
<dbReference type="OrthoDB" id="9766423at2"/>
<dbReference type="UniPathway" id="UPA00359">
    <property type="reaction ID" value="UER00482"/>
</dbReference>
<dbReference type="Proteomes" id="UP000000230">
    <property type="component" value="Chromosome"/>
</dbReference>
<dbReference type="GO" id="GO:0005886">
    <property type="term" value="C:plasma membrane"/>
    <property type="evidence" value="ECO:0007669"/>
    <property type="project" value="TreeGrafter"/>
</dbReference>
<dbReference type="GO" id="GO:0005524">
    <property type="term" value="F:ATP binding"/>
    <property type="evidence" value="ECO:0007669"/>
    <property type="project" value="UniProtKB-UniRule"/>
</dbReference>
<dbReference type="GO" id="GO:0009029">
    <property type="term" value="F:tetraacyldisaccharide 4'-kinase activity"/>
    <property type="evidence" value="ECO:0007669"/>
    <property type="project" value="UniProtKB-UniRule"/>
</dbReference>
<dbReference type="GO" id="GO:0009245">
    <property type="term" value="P:lipid A biosynthetic process"/>
    <property type="evidence" value="ECO:0007669"/>
    <property type="project" value="UniProtKB-UniRule"/>
</dbReference>
<dbReference type="GO" id="GO:0009244">
    <property type="term" value="P:lipopolysaccharide core region biosynthetic process"/>
    <property type="evidence" value="ECO:0007669"/>
    <property type="project" value="TreeGrafter"/>
</dbReference>
<dbReference type="HAMAP" id="MF_00409">
    <property type="entry name" value="LpxK"/>
    <property type="match status" value="1"/>
</dbReference>
<dbReference type="InterPro" id="IPR003758">
    <property type="entry name" value="LpxK"/>
</dbReference>
<dbReference type="InterPro" id="IPR027417">
    <property type="entry name" value="P-loop_NTPase"/>
</dbReference>
<dbReference type="NCBIfam" id="TIGR00682">
    <property type="entry name" value="lpxK"/>
    <property type="match status" value="1"/>
</dbReference>
<dbReference type="PANTHER" id="PTHR42724">
    <property type="entry name" value="TETRAACYLDISACCHARIDE 4'-KINASE"/>
    <property type="match status" value="1"/>
</dbReference>
<dbReference type="PANTHER" id="PTHR42724:SF1">
    <property type="entry name" value="TETRAACYLDISACCHARIDE 4'-KINASE, MITOCHONDRIAL-RELATED"/>
    <property type="match status" value="1"/>
</dbReference>
<dbReference type="Pfam" id="PF02606">
    <property type="entry name" value="LpxK"/>
    <property type="match status" value="1"/>
</dbReference>
<dbReference type="SUPFAM" id="SSF52540">
    <property type="entry name" value="P-loop containing nucleoside triphosphate hydrolases"/>
    <property type="match status" value="1"/>
</dbReference>
<reference key="1">
    <citation type="journal article" date="2010" name="PLoS Genet.">
        <title>Genome sequence of the plant growth promoting endophytic bacterium Enterobacter sp. 638.</title>
        <authorList>
            <person name="Taghavi S."/>
            <person name="van der Lelie D."/>
            <person name="Hoffman A."/>
            <person name="Zhang Y.B."/>
            <person name="Walla M.D."/>
            <person name="Vangronsveld J."/>
            <person name="Newman L."/>
            <person name="Monchy S."/>
        </authorList>
    </citation>
    <scope>NUCLEOTIDE SEQUENCE [LARGE SCALE GENOMIC DNA]</scope>
    <source>
        <strain>638</strain>
    </source>
</reference>
<protein>
    <recommendedName>
        <fullName evidence="1">Tetraacyldisaccharide 4'-kinase</fullName>
        <ecNumber evidence="1">2.7.1.130</ecNumber>
    </recommendedName>
    <alternativeName>
        <fullName evidence="1">Lipid A 4'-kinase</fullName>
    </alternativeName>
</protein>
<comment type="function">
    <text evidence="1">Transfers the gamma-phosphate of ATP to the 4'-position of a tetraacyldisaccharide 1-phosphate intermediate (termed DS-1-P) to form tetraacyldisaccharide 1,4'-bis-phosphate (lipid IVA).</text>
</comment>
<comment type="catalytic activity">
    <reaction evidence="1">
        <text>a lipid A disaccharide + ATP = a lipid IVA + ADP + H(+)</text>
        <dbReference type="Rhea" id="RHEA:67840"/>
        <dbReference type="ChEBI" id="CHEBI:15378"/>
        <dbReference type="ChEBI" id="CHEBI:30616"/>
        <dbReference type="ChEBI" id="CHEBI:176343"/>
        <dbReference type="ChEBI" id="CHEBI:176425"/>
        <dbReference type="ChEBI" id="CHEBI:456216"/>
        <dbReference type="EC" id="2.7.1.130"/>
    </reaction>
</comment>
<comment type="pathway">
    <text evidence="1">Glycolipid biosynthesis; lipid IV(A) biosynthesis; lipid IV(A) from (3R)-3-hydroxytetradecanoyl-[acyl-carrier-protein] and UDP-N-acetyl-alpha-D-glucosamine: step 6/6.</text>
</comment>
<comment type="similarity">
    <text evidence="1">Belongs to the LpxK family.</text>
</comment>
<keyword id="KW-0067">ATP-binding</keyword>
<keyword id="KW-0418">Kinase</keyword>
<keyword id="KW-0441">Lipid A biosynthesis</keyword>
<keyword id="KW-0444">Lipid biosynthesis</keyword>
<keyword id="KW-0443">Lipid metabolism</keyword>
<keyword id="KW-0547">Nucleotide-binding</keyword>
<keyword id="KW-0808">Transferase</keyword>
<name>LPXK_ENT38</name>